<reference key="1">
    <citation type="journal article" date="2005" name="Nature">
        <title>The genome of the social amoeba Dictyostelium discoideum.</title>
        <authorList>
            <person name="Eichinger L."/>
            <person name="Pachebat J.A."/>
            <person name="Gloeckner G."/>
            <person name="Rajandream M.A."/>
            <person name="Sucgang R."/>
            <person name="Berriman M."/>
            <person name="Song J."/>
            <person name="Olsen R."/>
            <person name="Szafranski K."/>
            <person name="Xu Q."/>
            <person name="Tunggal B."/>
            <person name="Kummerfeld S."/>
            <person name="Madera M."/>
            <person name="Konfortov B.A."/>
            <person name="Rivero F."/>
            <person name="Bankier A.T."/>
            <person name="Lehmann R."/>
            <person name="Hamlin N."/>
            <person name="Davies R."/>
            <person name="Gaudet P."/>
            <person name="Fey P."/>
            <person name="Pilcher K."/>
            <person name="Chen G."/>
            <person name="Saunders D."/>
            <person name="Sodergren E.J."/>
            <person name="Davis P."/>
            <person name="Kerhornou A."/>
            <person name="Nie X."/>
            <person name="Hall N."/>
            <person name="Anjard C."/>
            <person name="Hemphill L."/>
            <person name="Bason N."/>
            <person name="Farbrother P."/>
            <person name="Desany B."/>
            <person name="Just E."/>
            <person name="Morio T."/>
            <person name="Rost R."/>
            <person name="Churcher C.M."/>
            <person name="Cooper J."/>
            <person name="Haydock S."/>
            <person name="van Driessche N."/>
            <person name="Cronin A."/>
            <person name="Goodhead I."/>
            <person name="Muzny D.M."/>
            <person name="Mourier T."/>
            <person name="Pain A."/>
            <person name="Lu M."/>
            <person name="Harper D."/>
            <person name="Lindsay R."/>
            <person name="Hauser H."/>
            <person name="James K.D."/>
            <person name="Quiles M."/>
            <person name="Madan Babu M."/>
            <person name="Saito T."/>
            <person name="Buchrieser C."/>
            <person name="Wardroper A."/>
            <person name="Felder M."/>
            <person name="Thangavelu M."/>
            <person name="Johnson D."/>
            <person name="Knights A."/>
            <person name="Loulseged H."/>
            <person name="Mungall K.L."/>
            <person name="Oliver K."/>
            <person name="Price C."/>
            <person name="Quail M.A."/>
            <person name="Urushihara H."/>
            <person name="Hernandez J."/>
            <person name="Rabbinowitsch E."/>
            <person name="Steffen D."/>
            <person name="Sanders M."/>
            <person name="Ma J."/>
            <person name="Kohara Y."/>
            <person name="Sharp S."/>
            <person name="Simmonds M.N."/>
            <person name="Spiegler S."/>
            <person name="Tivey A."/>
            <person name="Sugano S."/>
            <person name="White B."/>
            <person name="Walker D."/>
            <person name="Woodward J.R."/>
            <person name="Winckler T."/>
            <person name="Tanaka Y."/>
            <person name="Shaulsky G."/>
            <person name="Schleicher M."/>
            <person name="Weinstock G.M."/>
            <person name="Rosenthal A."/>
            <person name="Cox E.C."/>
            <person name="Chisholm R.L."/>
            <person name="Gibbs R.A."/>
            <person name="Loomis W.F."/>
            <person name="Platzer M."/>
            <person name="Kay R.R."/>
            <person name="Williams J.G."/>
            <person name="Dear P.H."/>
            <person name="Noegel A.A."/>
            <person name="Barrell B.G."/>
            <person name="Kuspa A."/>
        </authorList>
    </citation>
    <scope>NUCLEOTIDE SEQUENCE [LARGE SCALE GENOMIC DNA]</scope>
    <source>
        <strain>AX4</strain>
    </source>
</reference>
<reference key="2">
    <citation type="submission" date="2010-01" db="UniProtKB">
        <authorList>
            <person name="Bienvenut W.V."/>
            <person name="Veltman D.M."/>
            <person name="Insall R.H."/>
        </authorList>
    </citation>
    <scope>PROTEIN SEQUENCE OF 1-17; 59-91; 153-162 AND 437-451</scope>
    <scope>ACETYLATION AT MET-1</scope>
    <scope>IDENTIFICATION BY MASS SPECTROMETRY</scope>
</reference>
<name>DNPEP_DICDI</name>
<comment type="function">
    <text evidence="1">Likely to play an important role in intracellular protein and peptide metabolism.</text>
</comment>
<comment type="catalytic activity">
    <reaction>
        <text>Release of an N-terminal aspartate or glutamate from a peptide, with a preference for aspartate.</text>
        <dbReference type="EC" id="3.4.11.21"/>
    </reaction>
</comment>
<comment type="cofactor">
    <cofactor evidence="1">
        <name>Zn(2+)</name>
        <dbReference type="ChEBI" id="CHEBI:29105"/>
    </cofactor>
    <text evidence="1">Binds 2 Zn(2+) ions per subunit.</text>
</comment>
<comment type="subunit">
    <text evidence="1">Tetrahedron-shaped homododecamer built from six homodimers.</text>
</comment>
<comment type="subcellular location">
    <subcellularLocation>
        <location evidence="1">Cytoplasm</location>
    </subcellularLocation>
</comment>
<comment type="similarity">
    <text evidence="4">Belongs to the peptidase M18 family.</text>
</comment>
<accession>Q54M70</accession>
<organism>
    <name type="scientific">Dictyostelium discoideum</name>
    <name type="common">Social amoeba</name>
    <dbReference type="NCBI Taxonomy" id="44689"/>
    <lineage>
        <taxon>Eukaryota</taxon>
        <taxon>Amoebozoa</taxon>
        <taxon>Evosea</taxon>
        <taxon>Eumycetozoa</taxon>
        <taxon>Dictyostelia</taxon>
        <taxon>Dictyosteliales</taxon>
        <taxon>Dictyosteliaceae</taxon>
        <taxon>Dictyostelium</taxon>
    </lineage>
</organism>
<proteinExistence type="evidence at protein level"/>
<evidence type="ECO:0000250" key="1"/>
<evidence type="ECO:0000256" key="2">
    <source>
        <dbReference type="SAM" id="MobiDB-lite"/>
    </source>
</evidence>
<evidence type="ECO:0000269" key="3">
    <source ref="2"/>
</evidence>
<evidence type="ECO:0000305" key="4"/>
<gene>
    <name type="primary">dnpep</name>
    <name type="ORF">DDB_G0286149</name>
</gene>
<feature type="chain" id="PRO_0000328103" description="Aspartyl aminopeptidase">
    <location>
        <begin position="1"/>
        <end position="484"/>
    </location>
</feature>
<feature type="region of interest" description="Disordered" evidence="2">
    <location>
        <begin position="188"/>
        <end position="213"/>
    </location>
</feature>
<feature type="compositionally biased region" description="Low complexity" evidence="2">
    <location>
        <begin position="188"/>
        <end position="206"/>
    </location>
</feature>
<feature type="binding site" evidence="1">
    <location>
        <position position="84"/>
    </location>
    <ligand>
        <name>Zn(2+)</name>
        <dbReference type="ChEBI" id="CHEBI:29105"/>
        <label>1</label>
    </ligand>
</feature>
<feature type="binding site" evidence="1">
    <location>
        <position position="159"/>
    </location>
    <ligand>
        <name>substrate</name>
    </ligand>
</feature>
<feature type="binding site" evidence="1">
    <location>
        <position position="266"/>
    </location>
    <ligand>
        <name>Zn(2+)</name>
        <dbReference type="ChEBI" id="CHEBI:29105"/>
        <label>1</label>
    </ligand>
</feature>
<feature type="binding site" evidence="1">
    <location>
        <position position="266"/>
    </location>
    <ligand>
        <name>Zn(2+)</name>
        <dbReference type="ChEBI" id="CHEBI:29105"/>
        <label>2</label>
    </ligand>
</feature>
<feature type="binding site" evidence="1">
    <location>
        <position position="301"/>
    </location>
    <ligand>
        <name>substrate</name>
    </ligand>
</feature>
<feature type="binding site" evidence="1">
    <location>
        <position position="302"/>
    </location>
    <ligand>
        <name>Zn(2+)</name>
        <dbReference type="ChEBI" id="CHEBI:29105"/>
        <label>2</label>
    </ligand>
</feature>
<feature type="binding site" evidence="1">
    <location>
        <position position="354"/>
    </location>
    <ligand>
        <name>substrate</name>
    </ligand>
</feature>
<feature type="binding site" evidence="1">
    <location>
        <position position="354"/>
    </location>
    <ligand>
        <name>Zn(2+)</name>
        <dbReference type="ChEBI" id="CHEBI:29105"/>
        <label>1</label>
    </ligand>
</feature>
<feature type="binding site" evidence="1">
    <location>
        <position position="357"/>
    </location>
    <ligand>
        <name>substrate</name>
    </ligand>
</feature>
<feature type="binding site" evidence="1">
    <location>
        <position position="382"/>
    </location>
    <ligand>
        <name>substrate</name>
    </ligand>
</feature>
<feature type="binding site" evidence="1">
    <location>
        <position position="389"/>
    </location>
    <ligand>
        <name>substrate</name>
    </ligand>
</feature>
<feature type="binding site" evidence="1">
    <location>
        <position position="448"/>
    </location>
    <ligand>
        <name>Zn(2+)</name>
        <dbReference type="ChEBI" id="CHEBI:29105"/>
        <label>2</label>
    </ligand>
</feature>
<feature type="modified residue" description="N-acetylmethionine" evidence="3">
    <location>
        <position position="1"/>
    </location>
</feature>
<dbReference type="EC" id="3.4.11.21"/>
<dbReference type="EMBL" id="AAFI02000085">
    <property type="protein sequence ID" value="EAL64367.1"/>
    <property type="molecule type" value="Genomic_DNA"/>
</dbReference>
<dbReference type="RefSeq" id="XP_637878.1">
    <property type="nucleotide sequence ID" value="XM_632786.1"/>
</dbReference>
<dbReference type="SMR" id="Q54M70"/>
<dbReference type="FunCoup" id="Q54M70">
    <property type="interactions" value="721"/>
</dbReference>
<dbReference type="STRING" id="44689.Q54M70"/>
<dbReference type="MEROPS" id="M18.A01"/>
<dbReference type="PaxDb" id="44689-DDB0266791"/>
<dbReference type="EnsemblProtists" id="EAL64367">
    <property type="protein sequence ID" value="EAL64367"/>
    <property type="gene ID" value="DDB_G0286149"/>
</dbReference>
<dbReference type="GeneID" id="8625475"/>
<dbReference type="KEGG" id="ddi:DDB_G0286149"/>
<dbReference type="dictyBase" id="DDB_G0286149">
    <property type="gene designation" value="dnpep"/>
</dbReference>
<dbReference type="VEuPathDB" id="AmoebaDB:DDB_G0286149"/>
<dbReference type="eggNOG" id="KOG2596">
    <property type="taxonomic scope" value="Eukaryota"/>
</dbReference>
<dbReference type="HOGENOM" id="CLU_019532_2_0_1"/>
<dbReference type="InParanoid" id="Q54M70"/>
<dbReference type="OMA" id="GPILKVN"/>
<dbReference type="PhylomeDB" id="Q54M70"/>
<dbReference type="PRO" id="PR:Q54M70"/>
<dbReference type="Proteomes" id="UP000002195">
    <property type="component" value="Chromosome 4"/>
</dbReference>
<dbReference type="GO" id="GO:0005737">
    <property type="term" value="C:cytoplasm"/>
    <property type="evidence" value="ECO:0007669"/>
    <property type="project" value="UniProtKB-SubCell"/>
</dbReference>
<dbReference type="GO" id="GO:0004177">
    <property type="term" value="F:aminopeptidase activity"/>
    <property type="evidence" value="ECO:0000250"/>
    <property type="project" value="dictyBase"/>
</dbReference>
<dbReference type="GO" id="GO:0008237">
    <property type="term" value="F:metallopeptidase activity"/>
    <property type="evidence" value="ECO:0007669"/>
    <property type="project" value="UniProtKB-KW"/>
</dbReference>
<dbReference type="GO" id="GO:0008270">
    <property type="term" value="F:zinc ion binding"/>
    <property type="evidence" value="ECO:0007669"/>
    <property type="project" value="InterPro"/>
</dbReference>
<dbReference type="GO" id="GO:0006508">
    <property type="term" value="P:proteolysis"/>
    <property type="evidence" value="ECO:0007669"/>
    <property type="project" value="UniProtKB-KW"/>
</dbReference>
<dbReference type="CDD" id="cd05658">
    <property type="entry name" value="M18_DAP"/>
    <property type="match status" value="1"/>
</dbReference>
<dbReference type="FunFam" id="2.30.250.10:FF:000001">
    <property type="entry name" value="Aspartyl aminopeptidase 1"/>
    <property type="match status" value="1"/>
</dbReference>
<dbReference type="Gene3D" id="2.30.250.10">
    <property type="entry name" value="Aminopeptidase i, Domain 2"/>
    <property type="match status" value="1"/>
</dbReference>
<dbReference type="Gene3D" id="3.40.630.10">
    <property type="entry name" value="Zn peptidases"/>
    <property type="match status" value="1"/>
</dbReference>
<dbReference type="InterPro" id="IPR001948">
    <property type="entry name" value="Peptidase_M18"/>
</dbReference>
<dbReference type="InterPro" id="IPR023358">
    <property type="entry name" value="Peptidase_M18_dom2"/>
</dbReference>
<dbReference type="NCBIfam" id="NF002759">
    <property type="entry name" value="PRK02813.1"/>
    <property type="match status" value="1"/>
</dbReference>
<dbReference type="PANTHER" id="PTHR28570">
    <property type="entry name" value="ASPARTYL AMINOPEPTIDASE"/>
    <property type="match status" value="1"/>
</dbReference>
<dbReference type="PANTHER" id="PTHR28570:SF3">
    <property type="entry name" value="ASPARTYL AMINOPEPTIDASE"/>
    <property type="match status" value="1"/>
</dbReference>
<dbReference type="Pfam" id="PF02127">
    <property type="entry name" value="Peptidase_M18"/>
    <property type="match status" value="1"/>
</dbReference>
<dbReference type="PRINTS" id="PR00932">
    <property type="entry name" value="AMINO1PTASE"/>
</dbReference>
<dbReference type="SUPFAM" id="SSF101821">
    <property type="entry name" value="Aminopeptidase/glucanase lid domain"/>
    <property type="match status" value="1"/>
</dbReference>
<dbReference type="SUPFAM" id="SSF53187">
    <property type="entry name" value="Zn-dependent exopeptidases"/>
    <property type="match status" value="1"/>
</dbReference>
<protein>
    <recommendedName>
        <fullName>Aspartyl aminopeptidase</fullName>
        <ecNumber>3.4.11.21</ecNumber>
    </recommendedName>
</protein>
<sequence>MEQYLPQAKEFISFIDKSPSPYHAVQYFSEILKSKGFIHLSEKQMWDIQPNKKYFFTRNQSCISAFAVGGKYKPGNGFNIAAAHTDSPNFKVRPVSKVESVGYQQVGVETYGGGLWYTWFDRDLTVAGRVIVKSGDGSYESKLVHIKKPILRIPSLAIHLDRSVNTDGFKYNTQNHLVPMIASKLSEPVESKSTTTTTTTESPKTSDPQDVNSSTTKHHAVLLELLSKELGCSVGDIQNFDLSVCDTQPAAIGGALDEFIFSPRCDNLGMSYCAMIGLLNVKESTLAQEENVLNVILFDNEEVGSSSPQGACAPLINDTISRVNSSMFASTCKPHELNNFIDLTLRNSFLISADMAHAIHPNYTANHEPLHRPALNKGPVIKYNANLRYASNGPTSFVILDICKKNGIPIQEFLVKNDSPCGSTIGPIISGTYGIRTVDIGNPQLSMHSIRETCGVADITHGINLIQKYFEQFTKLDIIKSDLE</sequence>
<keyword id="KW-0007">Acetylation</keyword>
<keyword id="KW-0031">Aminopeptidase</keyword>
<keyword id="KW-0963">Cytoplasm</keyword>
<keyword id="KW-0903">Direct protein sequencing</keyword>
<keyword id="KW-0378">Hydrolase</keyword>
<keyword id="KW-0479">Metal-binding</keyword>
<keyword id="KW-0482">Metalloprotease</keyword>
<keyword id="KW-0645">Protease</keyword>
<keyword id="KW-1185">Reference proteome</keyword>
<keyword id="KW-0862">Zinc</keyword>